<evidence type="ECO:0000250" key="1"/>
<evidence type="ECO:0000250" key="2">
    <source>
        <dbReference type="UniProtKB" id="Q9UIM3"/>
    </source>
</evidence>
<evidence type="ECO:0000256" key="3">
    <source>
        <dbReference type="SAM" id="MobiDB-lite"/>
    </source>
</evidence>
<name>FKBPL_RAT</name>
<keyword id="KW-0597">Phosphoprotein</keyword>
<keyword id="KW-1185">Reference proteome</keyword>
<keyword id="KW-0677">Repeat</keyword>
<keyword id="KW-0802">TPR repeat</keyword>
<sequence length="347" mass="37960">METSLISPMKENNTAQPQQREENTQQNLNAAVPIKQQSPGLLPEALEVGVKPDPASQILATQEIENPVAGFEGDSDKFHISTDEMAEHLQASDLWYCPDGSFVKKIIVHGHGLDKPKLGSKCRVLALGFPFGSGMPEGWTELTIGTGQWREKTWGELTEKCLESMRQGEEAKIHLPGSSTPLAKLRLDSFTNGRDSWELEAVEKEALAKEEHRRGTELFRAGNPQGAARCYGRALRLLLTLPPPGPPERTILHANLAACQLLLGHPQLAAQSCDRVLEREPGHLKALYRRGVAQAALGDLDKATADLKKVLAVDPKNRAAKEELGKVVIQGKIQDAGLARGLRKMFS</sequence>
<accession>Q6MG81</accession>
<protein>
    <recommendedName>
        <fullName>FK506-binding protein-like</fullName>
    </recommendedName>
    <alternativeName>
        <fullName>WAF-1/CIP1 stabilizing protein 39</fullName>
        <shortName>WISp39</shortName>
    </alternativeName>
</protein>
<feature type="chain" id="PRO_0000289880" description="FK506-binding protein-like">
    <location>
        <begin position="1"/>
        <end position="347"/>
    </location>
</feature>
<feature type="repeat" description="TPR 1">
    <location>
        <begin position="208"/>
        <end position="241"/>
    </location>
</feature>
<feature type="repeat" description="TPR 2">
    <location>
        <begin position="250"/>
        <end position="283"/>
    </location>
</feature>
<feature type="repeat" description="TPR 3">
    <location>
        <begin position="284"/>
        <end position="317"/>
    </location>
</feature>
<feature type="region of interest" description="Disordered" evidence="3">
    <location>
        <begin position="1"/>
        <end position="36"/>
    </location>
</feature>
<feature type="modified residue" description="Phosphothreonine" evidence="2">
    <location>
        <position position="3"/>
    </location>
</feature>
<reference key="1">
    <citation type="journal article" date="2004" name="Genome Res.">
        <title>The genomic sequence and comparative analysis of the rat major histocompatibility complex.</title>
        <authorList>
            <person name="Hurt P."/>
            <person name="Walter L."/>
            <person name="Sudbrak R."/>
            <person name="Klages S."/>
            <person name="Mueller I."/>
            <person name="Shiina T."/>
            <person name="Inoko H."/>
            <person name="Lehrach H."/>
            <person name="Guenther E."/>
            <person name="Reinhardt R."/>
            <person name="Himmelbauer H."/>
        </authorList>
    </citation>
    <scope>NUCLEOTIDE SEQUENCE [LARGE SCALE GENOMIC DNA]</scope>
    <source>
        <strain>Brown Norway</strain>
    </source>
</reference>
<reference key="2">
    <citation type="journal article" date="2004" name="Genome Res.">
        <title>The status, quality, and expansion of the NIH full-length cDNA project: the Mammalian Gene Collection (MGC).</title>
        <authorList>
            <consortium name="The MGC Project Team"/>
        </authorList>
    </citation>
    <scope>NUCLEOTIDE SEQUENCE [LARGE SCALE MRNA]</scope>
    <source>
        <tissue>Ovary</tissue>
    </source>
</reference>
<proteinExistence type="evidence at transcript level"/>
<organism>
    <name type="scientific">Rattus norvegicus</name>
    <name type="common">Rat</name>
    <dbReference type="NCBI Taxonomy" id="10116"/>
    <lineage>
        <taxon>Eukaryota</taxon>
        <taxon>Metazoa</taxon>
        <taxon>Chordata</taxon>
        <taxon>Craniata</taxon>
        <taxon>Vertebrata</taxon>
        <taxon>Euteleostomi</taxon>
        <taxon>Mammalia</taxon>
        <taxon>Eutheria</taxon>
        <taxon>Euarchontoglires</taxon>
        <taxon>Glires</taxon>
        <taxon>Rodentia</taxon>
        <taxon>Myomorpha</taxon>
        <taxon>Muroidea</taxon>
        <taxon>Muridae</taxon>
        <taxon>Murinae</taxon>
        <taxon>Rattus</taxon>
    </lineage>
</organism>
<dbReference type="EMBL" id="BX883044">
    <property type="protein sequence ID" value="CAE83965.1"/>
    <property type="molecule type" value="Genomic_DNA"/>
</dbReference>
<dbReference type="EMBL" id="BC086532">
    <property type="protein sequence ID" value="AAH86532.1"/>
    <property type="molecule type" value="mRNA"/>
</dbReference>
<dbReference type="RefSeq" id="NP_001002818.1">
    <property type="nucleotide sequence ID" value="NM_001002818.2"/>
</dbReference>
<dbReference type="SMR" id="Q6MG81"/>
<dbReference type="FunCoup" id="Q6MG81">
    <property type="interactions" value="1028"/>
</dbReference>
<dbReference type="STRING" id="10116.ENSRNOP00000000494"/>
<dbReference type="PhosphoSitePlus" id="Q6MG81"/>
<dbReference type="PaxDb" id="10116-ENSRNOP00000000494"/>
<dbReference type="Ensembl" id="ENSRNOT00000000494.7">
    <property type="protein sequence ID" value="ENSRNOP00000000494.3"/>
    <property type="gene ID" value="ENSRNOG00000000432.7"/>
</dbReference>
<dbReference type="GeneID" id="406168"/>
<dbReference type="KEGG" id="rno:406168"/>
<dbReference type="UCSC" id="RGD:1303227">
    <property type="organism name" value="rat"/>
</dbReference>
<dbReference type="AGR" id="RGD:1303227"/>
<dbReference type="CTD" id="63943"/>
<dbReference type="RGD" id="1303227">
    <property type="gene designation" value="Fkbpl"/>
</dbReference>
<dbReference type="eggNOG" id="KOG1124">
    <property type="taxonomic scope" value="Eukaryota"/>
</dbReference>
<dbReference type="GeneTree" id="ENSGT00920000149187"/>
<dbReference type="HOGENOM" id="CLU_013615_13_0_1"/>
<dbReference type="InParanoid" id="Q6MG81"/>
<dbReference type="OMA" id="WTELTIG"/>
<dbReference type="OrthoDB" id="59195at9989"/>
<dbReference type="PhylomeDB" id="Q6MG81"/>
<dbReference type="TreeFam" id="TF105297"/>
<dbReference type="Reactome" id="R-RNO-8852276">
    <property type="pathway name" value="The role of GTSE1 in G2/M progression after G2 checkpoint"/>
</dbReference>
<dbReference type="PRO" id="PR:Q6MG81"/>
<dbReference type="Proteomes" id="UP000002494">
    <property type="component" value="Chromosome 20"/>
</dbReference>
<dbReference type="Bgee" id="ENSRNOG00000000432">
    <property type="expression patterns" value="Expressed in testis and 19 other cell types or tissues"/>
</dbReference>
<dbReference type="GO" id="GO:0005576">
    <property type="term" value="C:extracellular region"/>
    <property type="evidence" value="ECO:0000266"/>
    <property type="project" value="RGD"/>
</dbReference>
<dbReference type="GO" id="GO:0045765">
    <property type="term" value="P:regulation of angiogenesis"/>
    <property type="evidence" value="ECO:0000266"/>
    <property type="project" value="RGD"/>
</dbReference>
<dbReference type="GO" id="GO:1905553">
    <property type="term" value="P:regulation of blood vessel branching"/>
    <property type="evidence" value="ECO:0000266"/>
    <property type="project" value="RGD"/>
</dbReference>
<dbReference type="FunFam" id="1.25.40.10:FF:000251">
    <property type="entry name" value="FK506-binding protein-like isoform X1"/>
    <property type="match status" value="1"/>
</dbReference>
<dbReference type="Gene3D" id="1.25.40.10">
    <property type="entry name" value="Tetratricopeptide repeat domain"/>
    <property type="match status" value="1"/>
</dbReference>
<dbReference type="InterPro" id="IPR050754">
    <property type="entry name" value="FKBP4/5/8-like"/>
</dbReference>
<dbReference type="InterPro" id="IPR011990">
    <property type="entry name" value="TPR-like_helical_dom_sf"/>
</dbReference>
<dbReference type="InterPro" id="IPR019734">
    <property type="entry name" value="TPR_rpt"/>
</dbReference>
<dbReference type="PANTHER" id="PTHR46512:SF10">
    <property type="entry name" value="FK506-BINDING PROTEIN-LIKE"/>
    <property type="match status" value="1"/>
</dbReference>
<dbReference type="PANTHER" id="PTHR46512">
    <property type="entry name" value="PEPTIDYLPROLYL ISOMERASE"/>
    <property type="match status" value="1"/>
</dbReference>
<dbReference type="Pfam" id="PF00515">
    <property type="entry name" value="TPR_1"/>
    <property type="match status" value="1"/>
</dbReference>
<dbReference type="Pfam" id="PF13432">
    <property type="entry name" value="TPR_16"/>
    <property type="match status" value="1"/>
</dbReference>
<dbReference type="SMART" id="SM00028">
    <property type="entry name" value="TPR"/>
    <property type="match status" value="3"/>
</dbReference>
<dbReference type="SUPFAM" id="SSF54534">
    <property type="entry name" value="FKBP-like"/>
    <property type="match status" value="1"/>
</dbReference>
<dbReference type="SUPFAM" id="SSF48452">
    <property type="entry name" value="TPR-like"/>
    <property type="match status" value="1"/>
</dbReference>
<dbReference type="PROSITE" id="PS50005">
    <property type="entry name" value="TPR"/>
    <property type="match status" value="2"/>
</dbReference>
<dbReference type="PROSITE" id="PS50293">
    <property type="entry name" value="TPR_REGION"/>
    <property type="match status" value="1"/>
</dbReference>
<gene>
    <name type="primary">Fkbpl</name>
</gene>
<comment type="function">
    <text evidence="1">May be involved in response to X-ray. Regulates p21 protein stability by binding to Hsp90 and p21.</text>
</comment>
<comment type="subunit">
    <text evidence="1">Forms a ternary complex with CDKN1A/p21 and HSP90AB1/Hsp90.</text>
</comment>